<gene>
    <name evidence="1" type="primary">atpA</name>
    <name type="ordered locus">MSMEG_4938</name>
    <name type="ordered locus">MSMEI_4811</name>
</gene>
<accession>A0R202</accession>
<accession>I7GD71</accession>
<reference key="1">
    <citation type="submission" date="2006-10" db="EMBL/GenBank/DDBJ databases">
        <authorList>
            <person name="Fleischmann R.D."/>
            <person name="Dodson R.J."/>
            <person name="Haft D.H."/>
            <person name="Merkel J.S."/>
            <person name="Nelson W.C."/>
            <person name="Fraser C.M."/>
        </authorList>
    </citation>
    <scope>NUCLEOTIDE SEQUENCE [LARGE SCALE GENOMIC DNA]</scope>
    <source>
        <strain>ATCC 700084 / mc(2)155</strain>
    </source>
</reference>
<reference key="2">
    <citation type="journal article" date="2007" name="Genome Biol.">
        <title>Interrupted coding sequences in Mycobacterium smegmatis: authentic mutations or sequencing errors?</title>
        <authorList>
            <person name="Deshayes C."/>
            <person name="Perrodou E."/>
            <person name="Gallien S."/>
            <person name="Euphrasie D."/>
            <person name="Schaeffer C."/>
            <person name="Van-Dorsselaer A."/>
            <person name="Poch O."/>
            <person name="Lecompte O."/>
            <person name="Reyrat J.-M."/>
        </authorList>
    </citation>
    <scope>NUCLEOTIDE SEQUENCE [LARGE SCALE GENOMIC DNA]</scope>
    <source>
        <strain>ATCC 700084 / mc(2)155</strain>
    </source>
</reference>
<reference key="3">
    <citation type="journal article" date="2009" name="Genome Res.">
        <title>Ortho-proteogenomics: multiple proteomes investigation through orthology and a new MS-based protocol.</title>
        <authorList>
            <person name="Gallien S."/>
            <person name="Perrodou E."/>
            <person name="Carapito C."/>
            <person name="Deshayes C."/>
            <person name="Reyrat J.-M."/>
            <person name="Van Dorsselaer A."/>
            <person name="Poch O."/>
            <person name="Schaeffer C."/>
            <person name="Lecompte O."/>
        </authorList>
    </citation>
    <scope>NUCLEOTIDE SEQUENCE [LARGE SCALE GENOMIC DNA]</scope>
    <scope>IDENTIFICATION BY MASS SPECTROMETRY [LARGE SCALE ANALYSIS]</scope>
    <scope>CLEAVAGE OF INITIATOR METHIONINE</scope>
    <source>
        <strain>ATCC 700084 / mc(2)155</strain>
    </source>
</reference>
<dbReference type="EC" id="7.1.2.2" evidence="1"/>
<dbReference type="EMBL" id="CP000480">
    <property type="protein sequence ID" value="ABK72810.1"/>
    <property type="molecule type" value="Genomic_DNA"/>
</dbReference>
<dbReference type="EMBL" id="CP001663">
    <property type="protein sequence ID" value="AFP41256.1"/>
    <property type="molecule type" value="Genomic_DNA"/>
</dbReference>
<dbReference type="RefSeq" id="WP_003896330.1">
    <property type="nucleotide sequence ID" value="NZ_SIJM01000067.1"/>
</dbReference>
<dbReference type="RefSeq" id="YP_889190.1">
    <property type="nucleotide sequence ID" value="NC_008596.1"/>
</dbReference>
<dbReference type="PDB" id="6FOC">
    <property type="method" value="X-ray"/>
    <property type="resolution" value="4.00 A"/>
    <property type="chains" value="A/B/C=1-548"/>
</dbReference>
<dbReference type="PDB" id="7JG8">
    <property type="method" value="EM"/>
    <property type="resolution" value="3.30 A"/>
    <property type="chains" value="A/B/C=1-548"/>
</dbReference>
<dbReference type="PDB" id="7JG9">
    <property type="method" value="EM"/>
    <property type="resolution" value="3.40 A"/>
    <property type="chains" value="A/B/C=1-548"/>
</dbReference>
<dbReference type="PDB" id="7JGA">
    <property type="method" value="EM"/>
    <property type="resolution" value="3.20 A"/>
    <property type="chains" value="A/B/C=1-548"/>
</dbReference>
<dbReference type="PDB" id="7NJK">
    <property type="method" value="EM"/>
    <property type="resolution" value="2.52 A"/>
    <property type="chains" value="A/B/C=1-548"/>
</dbReference>
<dbReference type="PDB" id="7NJL">
    <property type="method" value="EM"/>
    <property type="resolution" value="2.71 A"/>
    <property type="chains" value="A/B/C=1-548"/>
</dbReference>
<dbReference type="PDB" id="7NJM">
    <property type="method" value="EM"/>
    <property type="resolution" value="2.84 A"/>
    <property type="chains" value="A/B/C=1-548"/>
</dbReference>
<dbReference type="PDB" id="7NJN">
    <property type="method" value="EM"/>
    <property type="resolution" value="2.64 A"/>
    <property type="chains" value="A/B/C=1-548"/>
</dbReference>
<dbReference type="PDB" id="7NJO">
    <property type="method" value="EM"/>
    <property type="resolution" value="2.92 A"/>
    <property type="chains" value="A/B/C=1-548"/>
</dbReference>
<dbReference type="PDB" id="7NJP">
    <property type="method" value="EM"/>
    <property type="resolution" value="2.84 A"/>
    <property type="chains" value="A/B/C=1-548"/>
</dbReference>
<dbReference type="PDB" id="7NJQ">
    <property type="method" value="EM"/>
    <property type="resolution" value="2.67 A"/>
    <property type="chains" value="A/B/C=1-548"/>
</dbReference>
<dbReference type="PDB" id="7NJR">
    <property type="method" value="EM"/>
    <property type="resolution" value="2.56 A"/>
    <property type="chains" value="A/B/C=1-548"/>
</dbReference>
<dbReference type="PDB" id="7NJS">
    <property type="method" value="EM"/>
    <property type="resolution" value="2.46 A"/>
    <property type="chains" value="A/B/C=1-548"/>
</dbReference>
<dbReference type="PDB" id="7NK7">
    <property type="method" value="EM"/>
    <property type="resolution" value="2.11 A"/>
    <property type="chains" value="A/B/C=1-548"/>
</dbReference>
<dbReference type="PDB" id="7NKB">
    <property type="method" value="EM"/>
    <property type="resolution" value="2.90 A"/>
    <property type="chains" value="C=1-548"/>
</dbReference>
<dbReference type="PDB" id="7NKD">
    <property type="method" value="EM"/>
    <property type="resolution" value="3.12 A"/>
    <property type="chains" value="A/B/C=1-548"/>
</dbReference>
<dbReference type="PDB" id="7NKH">
    <property type="method" value="EM"/>
    <property type="resolution" value="2.78 A"/>
    <property type="chains" value="A/B/C=1-548"/>
</dbReference>
<dbReference type="PDB" id="7NKJ">
    <property type="method" value="EM"/>
    <property type="resolution" value="2.17 A"/>
    <property type="chains" value="A/B/C=1-548"/>
</dbReference>
<dbReference type="PDB" id="7NKK">
    <property type="method" value="EM"/>
    <property type="resolution" value="3.60 A"/>
    <property type="chains" value="C=1-548"/>
</dbReference>
<dbReference type="PDB" id="7NKL">
    <property type="method" value="EM"/>
    <property type="resolution" value="3.67 A"/>
    <property type="chains" value="A/B/C=1-548"/>
</dbReference>
<dbReference type="PDB" id="7NKN">
    <property type="method" value="EM"/>
    <property type="resolution" value="2.71 A"/>
    <property type="chains" value="C=1-548"/>
</dbReference>
<dbReference type="PDB" id="7NKQ">
    <property type="method" value="EM"/>
    <property type="resolution" value="2.98 A"/>
    <property type="chains" value="A/B/C=1-548"/>
</dbReference>
<dbReference type="PDB" id="7NL9">
    <property type="method" value="EM"/>
    <property type="resolution" value="2.86 A"/>
    <property type="chains" value="C=1-548"/>
</dbReference>
<dbReference type="PDB" id="7Y5A">
    <property type="method" value="EM"/>
    <property type="resolution" value="3.50 A"/>
    <property type="chains" value="A/B/C=1-548"/>
</dbReference>
<dbReference type="PDB" id="7Y5B">
    <property type="method" value="EM"/>
    <property type="resolution" value="4.40 A"/>
    <property type="chains" value="A/B/C=1-548"/>
</dbReference>
<dbReference type="PDB" id="7Y5C">
    <property type="method" value="EM"/>
    <property type="resolution" value="4.70 A"/>
    <property type="chains" value="A/B/C=1-548"/>
</dbReference>
<dbReference type="PDB" id="7Y5D">
    <property type="method" value="EM"/>
    <property type="resolution" value="7.30 A"/>
    <property type="chains" value="A/B/C=1-548"/>
</dbReference>
<dbReference type="PDB" id="8G08">
    <property type="method" value="EM"/>
    <property type="resolution" value="2.80 A"/>
    <property type="chains" value="A/B/C=1-548"/>
</dbReference>
<dbReference type="PDB" id="8G09">
    <property type="method" value="EM"/>
    <property type="resolution" value="3.10 A"/>
    <property type="chains" value="A/B/C=1-548"/>
</dbReference>
<dbReference type="PDB" id="8G0A">
    <property type="method" value="EM"/>
    <property type="resolution" value="2.90 A"/>
    <property type="chains" value="A/B/C=1-548"/>
</dbReference>
<dbReference type="PDB" id="8G0C">
    <property type="method" value="EM"/>
    <property type="resolution" value="2.80 A"/>
    <property type="chains" value="A/B/C=1-548"/>
</dbReference>
<dbReference type="PDB" id="8G0D">
    <property type="method" value="EM"/>
    <property type="resolution" value="2.90 A"/>
    <property type="chains" value="A/B/C=1-548"/>
</dbReference>
<dbReference type="PDB" id="8G0E">
    <property type="method" value="EM"/>
    <property type="resolution" value="2.60 A"/>
    <property type="chains" value="A/B/C=1-548"/>
</dbReference>
<dbReference type="PDBsum" id="6FOC"/>
<dbReference type="PDBsum" id="7JG8"/>
<dbReference type="PDBsum" id="7JG9"/>
<dbReference type="PDBsum" id="7JGA"/>
<dbReference type="PDBsum" id="7NJK"/>
<dbReference type="PDBsum" id="7NJL"/>
<dbReference type="PDBsum" id="7NJM"/>
<dbReference type="PDBsum" id="7NJN"/>
<dbReference type="PDBsum" id="7NJO"/>
<dbReference type="PDBsum" id="7NJP"/>
<dbReference type="PDBsum" id="7NJQ"/>
<dbReference type="PDBsum" id="7NJR"/>
<dbReference type="PDBsum" id="7NJS"/>
<dbReference type="PDBsum" id="7NK7"/>
<dbReference type="PDBsum" id="7NKB"/>
<dbReference type="PDBsum" id="7NKD"/>
<dbReference type="PDBsum" id="7NKH"/>
<dbReference type="PDBsum" id="7NKJ"/>
<dbReference type="PDBsum" id="7NKK"/>
<dbReference type="PDBsum" id="7NKL"/>
<dbReference type="PDBsum" id="7NKN"/>
<dbReference type="PDBsum" id="7NKQ"/>
<dbReference type="PDBsum" id="7NL9"/>
<dbReference type="PDBsum" id="7Y5A"/>
<dbReference type="PDBsum" id="7Y5B"/>
<dbReference type="PDBsum" id="7Y5C"/>
<dbReference type="PDBsum" id="7Y5D"/>
<dbReference type="PDBsum" id="8G08"/>
<dbReference type="PDBsum" id="8G09"/>
<dbReference type="PDBsum" id="8G0A"/>
<dbReference type="PDBsum" id="8G0C"/>
<dbReference type="PDBsum" id="8G0D"/>
<dbReference type="PDBsum" id="8G0E"/>
<dbReference type="EMDB" id="EMD-12377"/>
<dbReference type="EMDB" id="EMD-12382"/>
<dbReference type="EMDB" id="EMD-12387"/>
<dbReference type="EMDB" id="EMD-12392"/>
<dbReference type="EMDB" id="EMD-12397"/>
<dbReference type="EMDB" id="EMD-12402"/>
<dbReference type="EMDB" id="EMD-12407"/>
<dbReference type="EMDB" id="EMD-12412"/>
<dbReference type="EMDB" id="EMD-12417"/>
<dbReference type="EMDB" id="EMD-12432"/>
<dbReference type="EMDB" id="EMD-12436"/>
<dbReference type="EMDB" id="EMD-12438"/>
<dbReference type="EMDB" id="EMD-12439"/>
<dbReference type="EMDB" id="EMD-12441"/>
<dbReference type="EMDB" id="EMD-12442"/>
<dbReference type="EMDB" id="EMD-12444"/>
<dbReference type="EMDB" id="EMD-12446"/>
<dbReference type="EMDB" id="EMD-12461"/>
<dbReference type="EMDB" id="EMD-29649"/>
<dbReference type="EMDB" id="EMD-29650"/>
<dbReference type="EMDB" id="EMD-29651"/>
<dbReference type="EMDB" id="EMD-29653"/>
<dbReference type="EMDB" id="EMD-29654"/>
<dbReference type="EMDB" id="EMD-29655"/>
<dbReference type="EMDB" id="EMD-33614"/>
<dbReference type="EMDB" id="EMD-33615"/>
<dbReference type="EMDB" id="EMD-33616"/>
<dbReference type="EMDB" id="EMD-33617"/>
<dbReference type="SMR" id="A0R202"/>
<dbReference type="STRING" id="246196.MSMEG_4938"/>
<dbReference type="PaxDb" id="246196-MSMEI_4811"/>
<dbReference type="GeneID" id="93459608"/>
<dbReference type="KEGG" id="msb:LJ00_24420"/>
<dbReference type="KEGG" id="msg:MSMEI_4811"/>
<dbReference type="KEGG" id="msm:MSMEG_4938"/>
<dbReference type="PATRIC" id="fig|246196.19.peg.4817"/>
<dbReference type="eggNOG" id="COG0056">
    <property type="taxonomic scope" value="Bacteria"/>
</dbReference>
<dbReference type="OrthoDB" id="9803053at2"/>
<dbReference type="Proteomes" id="UP000000757">
    <property type="component" value="Chromosome"/>
</dbReference>
<dbReference type="Proteomes" id="UP000006158">
    <property type="component" value="Chromosome"/>
</dbReference>
<dbReference type="GO" id="GO:0005886">
    <property type="term" value="C:plasma membrane"/>
    <property type="evidence" value="ECO:0007669"/>
    <property type="project" value="UniProtKB-SubCell"/>
</dbReference>
<dbReference type="GO" id="GO:0045259">
    <property type="term" value="C:proton-transporting ATP synthase complex"/>
    <property type="evidence" value="ECO:0007669"/>
    <property type="project" value="UniProtKB-KW"/>
</dbReference>
<dbReference type="GO" id="GO:0043531">
    <property type="term" value="F:ADP binding"/>
    <property type="evidence" value="ECO:0007669"/>
    <property type="project" value="TreeGrafter"/>
</dbReference>
<dbReference type="GO" id="GO:0005524">
    <property type="term" value="F:ATP binding"/>
    <property type="evidence" value="ECO:0007669"/>
    <property type="project" value="UniProtKB-UniRule"/>
</dbReference>
<dbReference type="GO" id="GO:0046933">
    <property type="term" value="F:proton-transporting ATP synthase activity, rotational mechanism"/>
    <property type="evidence" value="ECO:0007669"/>
    <property type="project" value="UniProtKB-UniRule"/>
</dbReference>
<dbReference type="CDD" id="cd18113">
    <property type="entry name" value="ATP-synt_F1_alpha_C"/>
    <property type="match status" value="1"/>
</dbReference>
<dbReference type="CDD" id="cd18116">
    <property type="entry name" value="ATP-synt_F1_alpha_N"/>
    <property type="match status" value="1"/>
</dbReference>
<dbReference type="CDD" id="cd01132">
    <property type="entry name" value="F1-ATPase_alpha_CD"/>
    <property type="match status" value="1"/>
</dbReference>
<dbReference type="FunFam" id="1.20.150.20:FF:000001">
    <property type="entry name" value="ATP synthase subunit alpha"/>
    <property type="match status" value="1"/>
</dbReference>
<dbReference type="FunFam" id="2.40.30.20:FF:000001">
    <property type="entry name" value="ATP synthase subunit alpha"/>
    <property type="match status" value="1"/>
</dbReference>
<dbReference type="FunFam" id="3.40.50.300:FF:000002">
    <property type="entry name" value="ATP synthase subunit alpha"/>
    <property type="match status" value="1"/>
</dbReference>
<dbReference type="Gene3D" id="2.40.30.20">
    <property type="match status" value="1"/>
</dbReference>
<dbReference type="Gene3D" id="1.20.150.20">
    <property type="entry name" value="ATP synthase alpha/beta chain, C-terminal domain"/>
    <property type="match status" value="1"/>
</dbReference>
<dbReference type="Gene3D" id="3.40.50.300">
    <property type="entry name" value="P-loop containing nucleotide triphosphate hydrolases"/>
    <property type="match status" value="1"/>
</dbReference>
<dbReference type="HAMAP" id="MF_01346">
    <property type="entry name" value="ATP_synth_alpha_bact"/>
    <property type="match status" value="1"/>
</dbReference>
<dbReference type="InterPro" id="IPR023366">
    <property type="entry name" value="ATP_synth_asu-like_sf"/>
</dbReference>
<dbReference type="InterPro" id="IPR000793">
    <property type="entry name" value="ATP_synth_asu_C"/>
</dbReference>
<dbReference type="InterPro" id="IPR038376">
    <property type="entry name" value="ATP_synth_asu_C_sf"/>
</dbReference>
<dbReference type="InterPro" id="IPR033732">
    <property type="entry name" value="ATP_synth_F1_a_nt-bd_dom"/>
</dbReference>
<dbReference type="InterPro" id="IPR005294">
    <property type="entry name" value="ATP_synth_F1_asu"/>
</dbReference>
<dbReference type="InterPro" id="IPR020003">
    <property type="entry name" value="ATPase_a/bsu_AS"/>
</dbReference>
<dbReference type="InterPro" id="IPR004100">
    <property type="entry name" value="ATPase_F1/V1/A1_a/bsu_N"/>
</dbReference>
<dbReference type="InterPro" id="IPR036121">
    <property type="entry name" value="ATPase_F1/V1/A1_a/bsu_N_sf"/>
</dbReference>
<dbReference type="InterPro" id="IPR000194">
    <property type="entry name" value="ATPase_F1/V1/A1_a/bsu_nucl-bd"/>
</dbReference>
<dbReference type="InterPro" id="IPR027417">
    <property type="entry name" value="P-loop_NTPase"/>
</dbReference>
<dbReference type="NCBIfam" id="TIGR00962">
    <property type="entry name" value="atpA"/>
    <property type="match status" value="1"/>
</dbReference>
<dbReference type="NCBIfam" id="NF009884">
    <property type="entry name" value="PRK13343.1"/>
    <property type="match status" value="1"/>
</dbReference>
<dbReference type="PANTHER" id="PTHR48082">
    <property type="entry name" value="ATP SYNTHASE SUBUNIT ALPHA, MITOCHONDRIAL"/>
    <property type="match status" value="1"/>
</dbReference>
<dbReference type="PANTHER" id="PTHR48082:SF2">
    <property type="entry name" value="ATP SYNTHASE SUBUNIT ALPHA, MITOCHONDRIAL"/>
    <property type="match status" value="1"/>
</dbReference>
<dbReference type="Pfam" id="PF00006">
    <property type="entry name" value="ATP-synt_ab"/>
    <property type="match status" value="1"/>
</dbReference>
<dbReference type="Pfam" id="PF00306">
    <property type="entry name" value="ATP-synt_ab_C"/>
    <property type="match status" value="1"/>
</dbReference>
<dbReference type="Pfam" id="PF02874">
    <property type="entry name" value="ATP-synt_ab_N"/>
    <property type="match status" value="1"/>
</dbReference>
<dbReference type="PIRSF" id="PIRSF039088">
    <property type="entry name" value="F_ATPase_subunit_alpha"/>
    <property type="match status" value="1"/>
</dbReference>
<dbReference type="SUPFAM" id="SSF47917">
    <property type="entry name" value="C-terminal domain of alpha and beta subunits of F1 ATP synthase"/>
    <property type="match status" value="1"/>
</dbReference>
<dbReference type="SUPFAM" id="SSF50615">
    <property type="entry name" value="N-terminal domain of alpha and beta subunits of F1 ATP synthase"/>
    <property type="match status" value="1"/>
</dbReference>
<dbReference type="SUPFAM" id="SSF52540">
    <property type="entry name" value="P-loop containing nucleoside triphosphate hydrolases"/>
    <property type="match status" value="1"/>
</dbReference>
<dbReference type="PROSITE" id="PS00152">
    <property type="entry name" value="ATPASE_ALPHA_BETA"/>
    <property type="match status" value="1"/>
</dbReference>
<proteinExistence type="evidence at protein level"/>
<organism>
    <name type="scientific">Mycolicibacterium smegmatis (strain ATCC 700084 / mc(2)155)</name>
    <name type="common">Mycobacterium smegmatis</name>
    <dbReference type="NCBI Taxonomy" id="246196"/>
    <lineage>
        <taxon>Bacteria</taxon>
        <taxon>Bacillati</taxon>
        <taxon>Actinomycetota</taxon>
        <taxon>Actinomycetes</taxon>
        <taxon>Mycobacteriales</taxon>
        <taxon>Mycobacteriaceae</taxon>
        <taxon>Mycolicibacterium</taxon>
    </lineage>
</organism>
<protein>
    <recommendedName>
        <fullName evidence="1">ATP synthase subunit alpha</fullName>
        <ecNumber evidence="1">7.1.2.2</ecNumber>
    </recommendedName>
    <alternativeName>
        <fullName evidence="1">ATP synthase F1 sector subunit alpha</fullName>
    </alternativeName>
    <alternativeName>
        <fullName evidence="1">F-ATPase subunit alpha</fullName>
    </alternativeName>
</protein>
<name>ATPA_MYCS2</name>
<keyword id="KW-0002">3D-structure</keyword>
<keyword id="KW-0066">ATP synthesis</keyword>
<keyword id="KW-0067">ATP-binding</keyword>
<keyword id="KW-1003">Cell membrane</keyword>
<keyword id="KW-0139">CF(1)</keyword>
<keyword id="KW-0375">Hydrogen ion transport</keyword>
<keyword id="KW-0406">Ion transport</keyword>
<keyword id="KW-0472">Membrane</keyword>
<keyword id="KW-0547">Nucleotide-binding</keyword>
<keyword id="KW-1185">Reference proteome</keyword>
<keyword id="KW-1278">Translocase</keyword>
<keyword id="KW-0813">Transport</keyword>
<feature type="initiator methionine" description="Removed" evidence="2">
    <location>
        <position position="1"/>
    </location>
</feature>
<feature type="chain" id="PRO_0000302669" description="ATP synthase subunit alpha">
    <location>
        <begin position="2"/>
        <end position="548"/>
    </location>
</feature>
<feature type="binding site" evidence="1">
    <location>
        <begin position="172"/>
        <end position="179"/>
    </location>
    <ligand>
        <name>ATP</name>
        <dbReference type="ChEBI" id="CHEBI:30616"/>
    </ligand>
</feature>
<feature type="site" description="Required for activity" evidence="1">
    <location>
        <position position="373"/>
    </location>
</feature>
<feature type="helix" evidence="5">
    <location>
        <begin position="8"/>
        <end position="20"/>
    </location>
</feature>
<feature type="strand" evidence="5">
    <location>
        <begin position="29"/>
        <end position="38"/>
    </location>
</feature>
<feature type="strand" evidence="5">
    <location>
        <begin position="41"/>
        <end position="45"/>
    </location>
</feature>
<feature type="strand" evidence="5">
    <location>
        <begin position="54"/>
        <end position="58"/>
    </location>
</feature>
<feature type="turn" evidence="5">
    <location>
        <begin position="59"/>
        <end position="61"/>
    </location>
</feature>
<feature type="strand" evidence="5">
    <location>
        <begin position="62"/>
        <end position="69"/>
    </location>
</feature>
<feature type="strand" evidence="5">
    <location>
        <begin position="74"/>
        <end position="78"/>
    </location>
</feature>
<feature type="helix" evidence="5">
    <location>
        <begin position="82"/>
        <end position="84"/>
    </location>
</feature>
<feature type="strand" evidence="5">
    <location>
        <begin position="90"/>
        <end position="103"/>
    </location>
</feature>
<feature type="helix" evidence="5">
    <location>
        <begin position="104"/>
        <end position="106"/>
    </location>
</feature>
<feature type="strand" evidence="5">
    <location>
        <begin position="119"/>
        <end position="121"/>
    </location>
</feature>
<feature type="strand" evidence="5">
    <location>
        <begin position="127"/>
        <end position="131"/>
    </location>
</feature>
<feature type="helix" evidence="5">
    <location>
        <begin position="139"/>
        <end position="141"/>
    </location>
</feature>
<feature type="strand" evidence="3">
    <location>
        <begin position="147"/>
        <end position="149"/>
    </location>
</feature>
<feature type="helix" evidence="5">
    <location>
        <begin position="154"/>
        <end position="159"/>
    </location>
</feature>
<feature type="strand" evidence="5">
    <location>
        <begin position="167"/>
        <end position="173"/>
    </location>
</feature>
<feature type="strand" evidence="3">
    <location>
        <begin position="174"/>
        <end position="177"/>
    </location>
</feature>
<feature type="helix" evidence="5">
    <location>
        <begin position="178"/>
        <end position="188"/>
    </location>
</feature>
<feature type="helix" evidence="5">
    <location>
        <begin position="190"/>
        <end position="195"/>
    </location>
</feature>
<feature type="turn" evidence="5">
    <location>
        <begin position="198"/>
        <end position="200"/>
    </location>
</feature>
<feature type="strand" evidence="5">
    <location>
        <begin position="202"/>
        <end position="210"/>
    </location>
</feature>
<feature type="helix" evidence="5">
    <location>
        <begin position="213"/>
        <end position="225"/>
    </location>
</feature>
<feature type="helix" evidence="5">
    <location>
        <begin position="228"/>
        <end position="230"/>
    </location>
</feature>
<feature type="strand" evidence="5">
    <location>
        <begin position="231"/>
        <end position="237"/>
    </location>
</feature>
<feature type="helix" evidence="5">
    <location>
        <begin position="243"/>
        <end position="261"/>
    </location>
</feature>
<feature type="turn" evidence="5">
    <location>
        <begin position="262"/>
        <end position="264"/>
    </location>
</feature>
<feature type="strand" evidence="5">
    <location>
        <begin position="266"/>
        <end position="272"/>
    </location>
</feature>
<feature type="helix" evidence="5">
    <location>
        <begin position="274"/>
        <end position="287"/>
    </location>
</feature>
<feature type="helix" evidence="5">
    <location>
        <begin position="294"/>
        <end position="296"/>
    </location>
</feature>
<feature type="helix" evidence="5">
    <location>
        <begin position="301"/>
        <end position="309"/>
    </location>
</feature>
<feature type="helix" evidence="5">
    <location>
        <begin position="317"/>
        <end position="319"/>
    </location>
</feature>
<feature type="strand" evidence="5">
    <location>
        <begin position="323"/>
        <end position="331"/>
    </location>
</feature>
<feature type="strand" evidence="3">
    <location>
        <begin position="337"/>
        <end position="339"/>
    </location>
</feature>
<feature type="helix" evidence="5">
    <location>
        <begin position="340"/>
        <end position="348"/>
    </location>
</feature>
<feature type="strand" evidence="5">
    <location>
        <begin position="349"/>
        <end position="355"/>
    </location>
</feature>
<feature type="helix" evidence="5">
    <location>
        <begin position="357"/>
        <end position="361"/>
    </location>
</feature>
<feature type="turn" evidence="5">
    <location>
        <begin position="370"/>
        <end position="372"/>
    </location>
</feature>
<feature type="strand" evidence="5">
    <location>
        <begin position="374"/>
        <end position="377"/>
    </location>
</feature>
<feature type="helix" evidence="5">
    <location>
        <begin position="378"/>
        <end position="381"/>
    </location>
</feature>
<feature type="helix" evidence="5">
    <location>
        <begin position="384"/>
        <end position="389"/>
    </location>
</feature>
<feature type="turn" evidence="5">
    <location>
        <begin position="390"/>
        <end position="392"/>
    </location>
</feature>
<feature type="helix" evidence="5">
    <location>
        <begin position="393"/>
        <end position="403"/>
    </location>
</feature>
<feature type="helix" evidence="5">
    <location>
        <begin position="404"/>
        <end position="406"/>
    </location>
</feature>
<feature type="turn" evidence="5">
    <location>
        <begin position="408"/>
        <end position="412"/>
    </location>
</feature>
<feature type="helix" evidence="5">
    <location>
        <begin position="415"/>
        <end position="431"/>
    </location>
</feature>
<feature type="helix" evidence="5">
    <location>
        <begin position="441"/>
        <end position="452"/>
    </location>
</feature>
<feature type="turn" evidence="5">
    <location>
        <begin position="453"/>
        <end position="458"/>
    </location>
</feature>
<feature type="helix" evidence="5">
    <location>
        <begin position="461"/>
        <end position="463"/>
    </location>
</feature>
<feature type="helix" evidence="5">
    <location>
        <begin position="464"/>
        <end position="478"/>
    </location>
</feature>
<feature type="helix" evidence="5">
    <location>
        <begin position="480"/>
        <end position="489"/>
    </location>
</feature>
<feature type="helix" evidence="5">
    <location>
        <begin position="494"/>
        <end position="510"/>
    </location>
</feature>
<feature type="strand" evidence="4">
    <location>
        <begin position="514"/>
        <end position="516"/>
    </location>
</feature>
<feature type="turn" evidence="5">
    <location>
        <begin position="530"/>
        <end position="532"/>
    </location>
</feature>
<feature type="strand" evidence="5">
    <location>
        <begin position="533"/>
        <end position="542"/>
    </location>
</feature>
<evidence type="ECO:0000255" key="1">
    <source>
        <dbReference type="HAMAP-Rule" id="MF_01346"/>
    </source>
</evidence>
<evidence type="ECO:0000269" key="2">
    <source>
    </source>
</evidence>
<evidence type="ECO:0007829" key="3">
    <source>
        <dbReference type="PDB" id="7JG8"/>
    </source>
</evidence>
<evidence type="ECO:0007829" key="4">
    <source>
        <dbReference type="PDB" id="7NJN"/>
    </source>
</evidence>
<evidence type="ECO:0007829" key="5">
    <source>
        <dbReference type="PDB" id="7NJS"/>
    </source>
</evidence>
<sequence length="548" mass="58889">MAELTISAADIEGAIEDYVSSFSADTEREEIGTVIDAGDGIAHVEGLPSVMTQELLEFPGGVLGVALNLDEHSVGAVILGEFEKIEEGQQVKRTGEVLSVPVGDAFLGRVVNPLGQPIDGQGDIAAETRRALELQAPSVVQRQSVSEPLQTGIKAIDAMTPIGRGQRQLIIGDRKTGKTAVCVDTILNQREAWLTGDPKQQVRCVYVAIGQKGTTIASVKRALEEGGAMEYTTIVAAPASDAAGFKWLAPYTGSAIGQHWMYNGKHVLIVFDDLSKQADAYRAISLLLRRPPGREAFPGDVFYLHSRLLERCAKLSDELGGGSMTGLPIIETKANDISAFIPTNVISITDGQCFLESDLFNQGVRPAINVGVSVSRVGGAAQIKAMKEVAGSLRLDLSQYRELEAFAAFASDLDAASKAQLDRGARLVELLKQPQYSPLAVEEQVVAIFLGTQGHLDSVPVEDVQRFESELLEHVKASHSDIFDGIRETKKLSEEAEEKLVSVINEFKKGFQASDGSSVVVSENAEALDPEDLEKESVKVRKPAPKKA</sequence>
<comment type="function">
    <text evidence="1">Produces ATP from ADP in the presence of a proton gradient across the membrane. The alpha chain is a regulatory subunit.</text>
</comment>
<comment type="catalytic activity">
    <reaction evidence="1">
        <text>ATP + H2O + 4 H(+)(in) = ADP + phosphate + 5 H(+)(out)</text>
        <dbReference type="Rhea" id="RHEA:57720"/>
        <dbReference type="ChEBI" id="CHEBI:15377"/>
        <dbReference type="ChEBI" id="CHEBI:15378"/>
        <dbReference type="ChEBI" id="CHEBI:30616"/>
        <dbReference type="ChEBI" id="CHEBI:43474"/>
        <dbReference type="ChEBI" id="CHEBI:456216"/>
        <dbReference type="EC" id="7.1.2.2"/>
    </reaction>
</comment>
<comment type="subunit">
    <text evidence="1">F-type ATPases have 2 components, CF(1) - the catalytic core - and CF(0) - the membrane proton channel. CF(1) has five subunits: alpha(3), beta(3), gamma(1), delta(1), epsilon(1). CF(0) has three main subunits: a(1), b(2) and c(9-12). The alpha and beta chains form an alternating ring which encloses part of the gamma chain. CF(1) is attached to CF(0) by a central stalk formed by the gamma and epsilon chains, while a peripheral stalk is formed by the delta and b chains.</text>
</comment>
<comment type="subcellular location">
    <subcellularLocation>
        <location evidence="1">Cell membrane</location>
        <topology evidence="1">Peripheral membrane protein</topology>
    </subcellularLocation>
</comment>
<comment type="similarity">
    <text evidence="1">Belongs to the ATPase alpha/beta chains family.</text>
</comment>